<evidence type="ECO:0000250" key="1">
    <source>
        <dbReference type="UniProtKB" id="P69441"/>
    </source>
</evidence>
<evidence type="ECO:0000305" key="2"/>
<reference key="1">
    <citation type="journal article" date="1995" name="Mol. Biochem. Parasitol.">
        <title>Primary structure of a putative adenylate kinase gene of Giardia lamblia.</title>
        <authorList>
            <person name="Rozario C."/>
            <person name="Mueller M."/>
        </authorList>
    </citation>
    <scope>NUCLEOTIDE SEQUENCE [GENOMIC DNA]</scope>
    <source>
        <strain>ATCC 30957 / WB</strain>
    </source>
</reference>
<sequence>MQSLIKYQPKSPLKYLSSYFGDRKKNLFKLVLLGAPGAGKGTQAKHLVSKYSLKHISPGNLLREEMNRNSPITAQIKDYVSKGQLVPDSIVIKLIENHIATIGDSNWLLDGFPRSESQAAALRASPDLFPTHIVELKVDQEAVVQRLGGRRFDPITGNTYHIIYDPPPPDIADRVVVRTDDREDVIRERFRVYAENKDLVDKVFNHSVVSINCEGQTIDEVSLQLDRVLSMPSTIHPSIIMPERNKKQ</sequence>
<proteinExistence type="inferred from homology"/>
<feature type="chain" id="PRO_0000158936" description="Adenylate kinase">
    <location>
        <begin position="1"/>
        <end position="248"/>
    </location>
</feature>
<feature type="region of interest" description="NMP" evidence="1">
    <location>
        <begin position="57"/>
        <end position="86"/>
    </location>
</feature>
<feature type="region of interest" description="LID" evidence="1">
    <location>
        <begin position="149"/>
        <end position="181"/>
    </location>
</feature>
<feature type="binding site" evidence="1">
    <location>
        <begin position="37"/>
        <end position="42"/>
    </location>
    <ligand>
        <name>ATP</name>
        <dbReference type="ChEBI" id="CHEBI:30616"/>
    </ligand>
</feature>
<feature type="binding site" evidence="1">
    <location>
        <position position="63"/>
    </location>
    <ligand>
        <name>AMP</name>
        <dbReference type="ChEBI" id="CHEBI:456215"/>
    </ligand>
</feature>
<feature type="binding site" evidence="1">
    <location>
        <begin position="84"/>
        <end position="86"/>
    </location>
    <ligand>
        <name>AMP</name>
        <dbReference type="ChEBI" id="CHEBI:456215"/>
    </ligand>
</feature>
<feature type="binding site" evidence="1">
    <location>
        <begin position="111"/>
        <end position="114"/>
    </location>
    <ligand>
        <name>AMP</name>
        <dbReference type="ChEBI" id="CHEBI:456215"/>
    </ligand>
</feature>
<feature type="binding site" evidence="1">
    <location>
        <position position="118"/>
    </location>
    <ligand>
        <name>AMP</name>
        <dbReference type="ChEBI" id="CHEBI:456215"/>
    </ligand>
</feature>
<feature type="binding site" evidence="1">
    <location>
        <position position="150"/>
    </location>
    <ligand>
        <name>ATP</name>
        <dbReference type="ChEBI" id="CHEBI:30616"/>
    </ligand>
</feature>
<feature type="binding site" evidence="1">
    <location>
        <position position="178"/>
    </location>
    <ligand>
        <name>AMP</name>
        <dbReference type="ChEBI" id="CHEBI:456215"/>
    </ligand>
</feature>
<feature type="binding site" evidence="1">
    <location>
        <position position="189"/>
    </location>
    <ligand>
        <name>AMP</name>
        <dbReference type="ChEBI" id="CHEBI:456215"/>
    </ligand>
</feature>
<name>KAD_GIAIN</name>
<protein>
    <recommendedName>
        <fullName>Adenylate kinase</fullName>
        <shortName>AK</shortName>
        <ecNumber>2.7.4.3</ecNumber>
    </recommendedName>
    <alternativeName>
        <fullName>ATP-AMP transphosphorylase</fullName>
    </alternativeName>
    <alternativeName>
        <fullName>ATP:AMP phosphotransferase</fullName>
    </alternativeName>
    <alternativeName>
        <fullName>Adenylate monophosphate kinase</fullName>
    </alternativeName>
</protein>
<accession>P49982</accession>
<keyword id="KW-0067">ATP-binding</keyword>
<keyword id="KW-0963">Cytoplasm</keyword>
<keyword id="KW-0418">Kinase</keyword>
<keyword id="KW-0547">Nucleotide-binding</keyword>
<keyword id="KW-0808">Transferase</keyword>
<dbReference type="EC" id="2.7.4.3"/>
<dbReference type="EMBL" id="U19901">
    <property type="protein sequence ID" value="AAC46846.1"/>
    <property type="molecule type" value="Genomic_DNA"/>
</dbReference>
<dbReference type="SMR" id="P49982"/>
<dbReference type="VEuPathDB" id="GiardiaDB:DHA2_28234"/>
<dbReference type="VEuPathDB" id="GiardiaDB:GL50581_2190"/>
<dbReference type="VEuPathDB" id="GiardiaDB:GL50803_0028234"/>
<dbReference type="VEuPathDB" id="GiardiaDB:QR46_3904"/>
<dbReference type="eggNOG" id="KOG3078">
    <property type="taxonomic scope" value="Eukaryota"/>
</dbReference>
<dbReference type="GO" id="GO:0005737">
    <property type="term" value="C:cytoplasm"/>
    <property type="evidence" value="ECO:0007669"/>
    <property type="project" value="UniProtKB-SubCell"/>
</dbReference>
<dbReference type="GO" id="GO:0004017">
    <property type="term" value="F:adenylate kinase activity"/>
    <property type="evidence" value="ECO:0007669"/>
    <property type="project" value="UniProtKB-EC"/>
</dbReference>
<dbReference type="GO" id="GO:0005524">
    <property type="term" value="F:ATP binding"/>
    <property type="evidence" value="ECO:0007669"/>
    <property type="project" value="UniProtKB-KW"/>
</dbReference>
<dbReference type="CDD" id="cd01428">
    <property type="entry name" value="ADK"/>
    <property type="match status" value="1"/>
</dbReference>
<dbReference type="Gene3D" id="3.40.50.300">
    <property type="entry name" value="P-loop containing nucleotide triphosphate hydrolases"/>
    <property type="match status" value="1"/>
</dbReference>
<dbReference type="HAMAP" id="MF_00235">
    <property type="entry name" value="Adenylate_kinase_Adk"/>
    <property type="match status" value="1"/>
</dbReference>
<dbReference type="InterPro" id="IPR006259">
    <property type="entry name" value="Adenyl_kin_sub"/>
</dbReference>
<dbReference type="InterPro" id="IPR000850">
    <property type="entry name" value="Adenylat/UMP-CMP_kin"/>
</dbReference>
<dbReference type="InterPro" id="IPR033690">
    <property type="entry name" value="Adenylat_kinase_CS"/>
</dbReference>
<dbReference type="InterPro" id="IPR027417">
    <property type="entry name" value="P-loop_NTPase"/>
</dbReference>
<dbReference type="NCBIfam" id="TIGR01351">
    <property type="entry name" value="adk"/>
    <property type="match status" value="1"/>
</dbReference>
<dbReference type="PANTHER" id="PTHR23359">
    <property type="entry name" value="NUCLEOTIDE KINASE"/>
    <property type="match status" value="1"/>
</dbReference>
<dbReference type="Pfam" id="PF00406">
    <property type="entry name" value="ADK"/>
    <property type="match status" value="1"/>
</dbReference>
<dbReference type="PRINTS" id="PR00094">
    <property type="entry name" value="ADENYLTKNASE"/>
</dbReference>
<dbReference type="SUPFAM" id="SSF52540">
    <property type="entry name" value="P-loop containing nucleoside triphosphate hydrolases"/>
    <property type="match status" value="1"/>
</dbReference>
<dbReference type="PROSITE" id="PS00113">
    <property type="entry name" value="ADENYLATE_KINASE"/>
    <property type="match status" value="1"/>
</dbReference>
<organism>
    <name type="scientific">Giardia intestinalis</name>
    <name type="common">Giardia lamblia</name>
    <dbReference type="NCBI Taxonomy" id="5741"/>
    <lineage>
        <taxon>Eukaryota</taxon>
        <taxon>Metamonada</taxon>
        <taxon>Diplomonadida</taxon>
        <taxon>Hexamitidae</taxon>
        <taxon>Giardiinae</taxon>
        <taxon>Giardia</taxon>
    </lineage>
</organism>
<comment type="function">
    <text evidence="1">Catalyzes the reversible transfer of the terminal phosphate group between ATP and AMP. Plays an important role in cellular energy homeostasis and in adenine nucleotide metabolism.</text>
</comment>
<comment type="catalytic activity">
    <reaction evidence="1">
        <text>AMP + ATP = 2 ADP</text>
        <dbReference type="Rhea" id="RHEA:12973"/>
        <dbReference type="ChEBI" id="CHEBI:30616"/>
        <dbReference type="ChEBI" id="CHEBI:456215"/>
        <dbReference type="ChEBI" id="CHEBI:456216"/>
        <dbReference type="EC" id="2.7.4.3"/>
    </reaction>
</comment>
<comment type="subunit">
    <text evidence="1">Monomer.</text>
</comment>
<comment type="subcellular location">
    <subcellularLocation>
        <location evidence="1">Cytoplasm</location>
    </subcellularLocation>
</comment>
<comment type="similarity">
    <text evidence="2">Belongs to the adenylate kinase family.</text>
</comment>